<accession>Q90162</accession>
<name>DPOL_NPVCF</name>
<organismHost>
    <name type="scientific">Choristoneura fumiferana</name>
    <name type="common">Spruce budworm moth</name>
    <name type="synonym">Archips fumiferana</name>
    <dbReference type="NCBI Taxonomy" id="7141"/>
</organismHost>
<sequence>MKIVTYNQLQEAFRDYSPRDFAISRDNVFRVMRIYYNENVGQLVAFCNTQLAGRLAQFYFTIKMDLYSYKQCYNSHIFATCRNRCSSYNTFVAPGVKNVYMDKINVIKFKRNGSSFGEKAAALDKFLHNANRVHMQTPVIEGTYMRFRRAQRCRNNCVTDDARPFELERFADDFQVVNPATLTTKIEPVMACFDIETHSDGHNSSKPECDVIMCIGLAVLKDNRYDKICFVYHKELVEISGNDEYTHVVVFNNESHMIASFFDFFKYANPDVILDYNGDVFDLPYIRGRLKGDKPLLGRYDLPALQPNTKLFITKIGNRTDTYYFNYYIHIDLYKYFGADANKRDVENFELNTLSQYYLNDNKVDLNWQTMVAMYNNKQLGTMIDYNLKDCLLPIRLFNKLKLNDFMYSQCLMYRLCTDDFICNISHLISSTFFHLALTNTRTDPVTGLVVHDPYFFNKDDLGRMSSKDAGFCAGMSRLQRKRIPLKDLPANSIRLGAINEIVNYEGGKVLQPRAGVYEFAFSLDFNSLYLTIMIDICACLTNLILCEDGNVYLNQDKQAINVQLLLQLLKQRSELKKCRDSQTDSEFLYDLYDQMQNLSKRTANSIYGYYGIFCKLLANYITRVGREKLTAAIGMIEGLSNDAELLSKFNLSTLTFRVLYGDTDSTFVLPTFKRDEIPEESCMVTLTRICAAVETRVNGLFANGYKMAFENLMSVLILLKKKKYCYINSANKIVFKGWLVKKDMPVFMRVAFRTAIEQVLRHQDLQKCLDSLLINMLMYFDAFGTTKPLTDYSFSMTYNDGAGKVTENESRPTKRRVVTVARHCREILLNKGTDFVPGNGDRIPYVLLDIQGSVTQKAYPLRLFDPRTMRISWLKHMTILNTFMNELLEIFGDEHTSALNKCYDAILTKYMQHQAYDKKRVTLIKINAAYKRKAPSDDAARKRARAGPSALRKQKAASNDEDSSDEDDEDCSQAIGSNNTFKFSLYKYK</sequence>
<reference key="1">
    <citation type="journal article" date="1995" name="Virology">
        <title>Identification, localization, transcription, and sequence analysis of the Choristoneura fumiferana nuclear polyhedrosis virus DNA polymerase gene.</title>
        <authorList>
            <person name="Liu J.J."/>
            <person name="Carstens E.B."/>
        </authorList>
    </citation>
    <scope>NUCLEOTIDE SEQUENCE [GENOMIC DNA]</scope>
</reference>
<evidence type="ECO:0000250" key="1"/>
<evidence type="ECO:0000256" key="2">
    <source>
        <dbReference type="SAM" id="MobiDB-lite"/>
    </source>
</evidence>
<evidence type="ECO:0000305" key="3"/>
<organism>
    <name type="scientific">Choristoneura fumiferana nuclear polyhedrosis virus</name>
    <name type="common">CfMNPV</name>
    <dbReference type="NCBI Taxonomy" id="208973"/>
    <lineage>
        <taxon>Viruses</taxon>
        <taxon>Viruses incertae sedis</taxon>
        <taxon>Naldaviricetes</taxon>
        <taxon>Lefavirales</taxon>
        <taxon>Baculoviridae</taxon>
        <taxon>Alphabaculovirus</taxon>
        <taxon>Alphabaculovirus chofumiferanae</taxon>
    </lineage>
</organism>
<gene>
    <name type="primary">POL</name>
</gene>
<comment type="function">
    <text evidence="1">Replicates the viral genome, host DNA polymerases cannot substitute for the viral enzyme in this process.</text>
</comment>
<comment type="catalytic activity">
    <reaction>
        <text>DNA(n) + a 2'-deoxyribonucleoside 5'-triphosphate = DNA(n+1) + diphosphate</text>
        <dbReference type="Rhea" id="RHEA:22508"/>
        <dbReference type="Rhea" id="RHEA-COMP:17339"/>
        <dbReference type="Rhea" id="RHEA-COMP:17340"/>
        <dbReference type="ChEBI" id="CHEBI:33019"/>
        <dbReference type="ChEBI" id="CHEBI:61560"/>
        <dbReference type="ChEBI" id="CHEBI:173112"/>
        <dbReference type="EC" id="2.7.7.7"/>
    </reaction>
</comment>
<comment type="similarity">
    <text evidence="3">Belongs to the DNA polymerase type-B family.</text>
</comment>
<protein>
    <recommendedName>
        <fullName>DNA polymerase</fullName>
        <ecNumber>2.7.7.7</ecNumber>
    </recommendedName>
</protein>
<proteinExistence type="inferred from homology"/>
<feature type="chain" id="PRO_0000046528" description="DNA polymerase">
    <location>
        <begin position="1"/>
        <end position="990"/>
    </location>
</feature>
<feature type="region of interest" description="Disordered" evidence="2">
    <location>
        <begin position="936"/>
        <end position="976"/>
    </location>
</feature>
<feature type="compositionally biased region" description="Acidic residues" evidence="2">
    <location>
        <begin position="960"/>
        <end position="972"/>
    </location>
</feature>
<keyword id="KW-0235">DNA replication</keyword>
<keyword id="KW-0238">DNA-binding</keyword>
<keyword id="KW-0239">DNA-directed DNA polymerase</keyword>
<keyword id="KW-0548">Nucleotidyltransferase</keyword>
<keyword id="KW-1185">Reference proteome</keyword>
<keyword id="KW-0808">Transferase</keyword>
<keyword id="KW-1194">Viral DNA replication</keyword>
<dbReference type="EC" id="2.7.7.7"/>
<dbReference type="EMBL" id="AF512031">
    <property type="protein sequence ID" value="AAC54375.1"/>
    <property type="molecule type" value="Genomic_DNA"/>
</dbReference>
<dbReference type="RefSeq" id="NP_848372.1">
    <property type="nucleotide sequence ID" value="NC_004778.3"/>
</dbReference>
<dbReference type="SMR" id="Q90162"/>
<dbReference type="KEGG" id="vg:1482691"/>
<dbReference type="OrthoDB" id="165at10239"/>
<dbReference type="Proteomes" id="UP000204418">
    <property type="component" value="Genome"/>
</dbReference>
<dbReference type="GO" id="GO:0003677">
    <property type="term" value="F:DNA binding"/>
    <property type="evidence" value="ECO:0007669"/>
    <property type="project" value="UniProtKB-KW"/>
</dbReference>
<dbReference type="GO" id="GO:0003887">
    <property type="term" value="F:DNA-directed DNA polymerase activity"/>
    <property type="evidence" value="ECO:0007669"/>
    <property type="project" value="UniProtKB-KW"/>
</dbReference>
<dbReference type="GO" id="GO:0000166">
    <property type="term" value="F:nucleotide binding"/>
    <property type="evidence" value="ECO:0007669"/>
    <property type="project" value="InterPro"/>
</dbReference>
<dbReference type="GO" id="GO:0006261">
    <property type="term" value="P:DNA-templated DNA replication"/>
    <property type="evidence" value="ECO:0007669"/>
    <property type="project" value="TreeGrafter"/>
</dbReference>
<dbReference type="GO" id="GO:0039693">
    <property type="term" value="P:viral DNA genome replication"/>
    <property type="evidence" value="ECO:0007669"/>
    <property type="project" value="UniProtKB-KW"/>
</dbReference>
<dbReference type="GO" id="GO:0019079">
    <property type="term" value="P:viral genome replication"/>
    <property type="evidence" value="ECO:0000250"/>
    <property type="project" value="UniProtKB"/>
</dbReference>
<dbReference type="FunFam" id="1.10.287.690:FF:000010">
    <property type="entry name" value="DNA polymerase"/>
    <property type="match status" value="1"/>
</dbReference>
<dbReference type="FunFam" id="3.30.420.10:FF:000173">
    <property type="entry name" value="DNA polymerase"/>
    <property type="match status" value="1"/>
</dbReference>
<dbReference type="Gene3D" id="1.10.132.60">
    <property type="entry name" value="DNA polymerase family B, C-terminal domain"/>
    <property type="match status" value="1"/>
</dbReference>
<dbReference type="Gene3D" id="1.10.287.690">
    <property type="entry name" value="Helix hairpin bin"/>
    <property type="match status" value="1"/>
</dbReference>
<dbReference type="Gene3D" id="3.90.1600.10">
    <property type="entry name" value="Palm domain of DNA polymerase"/>
    <property type="match status" value="1"/>
</dbReference>
<dbReference type="Gene3D" id="3.30.420.10">
    <property type="entry name" value="Ribonuclease H-like superfamily/Ribonuclease H"/>
    <property type="match status" value="1"/>
</dbReference>
<dbReference type="InterPro" id="IPR006172">
    <property type="entry name" value="DNA-dir_DNA_pol_B"/>
</dbReference>
<dbReference type="InterPro" id="IPR017964">
    <property type="entry name" value="DNA-dir_DNA_pol_B_CS"/>
</dbReference>
<dbReference type="InterPro" id="IPR006133">
    <property type="entry name" value="DNA-dir_DNA_pol_B_exonuc"/>
</dbReference>
<dbReference type="InterPro" id="IPR006134">
    <property type="entry name" value="DNA-dir_DNA_pol_B_multi_dom"/>
</dbReference>
<dbReference type="InterPro" id="IPR043502">
    <property type="entry name" value="DNA/RNA_pol_sf"/>
</dbReference>
<dbReference type="InterPro" id="IPR042087">
    <property type="entry name" value="DNA_pol_B_thumb"/>
</dbReference>
<dbReference type="InterPro" id="IPR023211">
    <property type="entry name" value="DNA_pol_palm_dom_sf"/>
</dbReference>
<dbReference type="InterPro" id="IPR050240">
    <property type="entry name" value="DNA_pol_type-B"/>
</dbReference>
<dbReference type="InterPro" id="IPR012337">
    <property type="entry name" value="RNaseH-like_sf"/>
</dbReference>
<dbReference type="InterPro" id="IPR036397">
    <property type="entry name" value="RNaseH_sf"/>
</dbReference>
<dbReference type="PANTHER" id="PTHR10322">
    <property type="entry name" value="DNA POLYMERASE CATALYTIC SUBUNIT"/>
    <property type="match status" value="1"/>
</dbReference>
<dbReference type="PANTHER" id="PTHR10322:SF23">
    <property type="entry name" value="DNA POLYMERASE DELTA CATALYTIC SUBUNIT"/>
    <property type="match status" value="1"/>
</dbReference>
<dbReference type="Pfam" id="PF00136">
    <property type="entry name" value="DNA_pol_B"/>
    <property type="match status" value="1"/>
</dbReference>
<dbReference type="Pfam" id="PF03104">
    <property type="entry name" value="DNA_pol_B_exo1"/>
    <property type="match status" value="1"/>
</dbReference>
<dbReference type="PRINTS" id="PR00106">
    <property type="entry name" value="DNAPOLB"/>
</dbReference>
<dbReference type="SMART" id="SM00486">
    <property type="entry name" value="POLBc"/>
    <property type="match status" value="1"/>
</dbReference>
<dbReference type="SUPFAM" id="SSF56672">
    <property type="entry name" value="DNA/RNA polymerases"/>
    <property type="match status" value="1"/>
</dbReference>
<dbReference type="SUPFAM" id="SSF53098">
    <property type="entry name" value="Ribonuclease H-like"/>
    <property type="match status" value="1"/>
</dbReference>
<dbReference type="PROSITE" id="PS00116">
    <property type="entry name" value="DNA_POLYMERASE_B"/>
    <property type="match status" value="1"/>
</dbReference>